<gene>
    <name evidence="1" type="primary">mtgA</name>
    <name type="ordered locus">ACIAD1061</name>
</gene>
<protein>
    <recommendedName>
        <fullName evidence="1">Biosynthetic peptidoglycan transglycosylase</fullName>
        <ecNumber evidence="1">2.4.99.28</ecNumber>
    </recommendedName>
    <alternativeName>
        <fullName evidence="1">Glycan polymerase</fullName>
    </alternativeName>
    <alternativeName>
        <fullName evidence="1">Peptidoglycan glycosyltransferase MtgA</fullName>
        <shortName evidence="1">PGT</shortName>
    </alternativeName>
</protein>
<keyword id="KW-0997">Cell inner membrane</keyword>
<keyword id="KW-1003">Cell membrane</keyword>
<keyword id="KW-0133">Cell shape</keyword>
<keyword id="KW-0961">Cell wall biogenesis/degradation</keyword>
<keyword id="KW-0328">Glycosyltransferase</keyword>
<keyword id="KW-0472">Membrane</keyword>
<keyword id="KW-0573">Peptidoglycan synthesis</keyword>
<keyword id="KW-0808">Transferase</keyword>
<keyword id="KW-0812">Transmembrane</keyword>
<keyword id="KW-1133">Transmembrane helix</keyword>
<dbReference type="EC" id="2.4.99.28" evidence="1"/>
<dbReference type="EMBL" id="Z46863">
    <property type="protein sequence ID" value="CAA86932.1"/>
    <property type="molecule type" value="Genomic_DNA"/>
</dbReference>
<dbReference type="EMBL" id="CR543861">
    <property type="protein sequence ID" value="CAG67949.1"/>
    <property type="molecule type" value="Genomic_DNA"/>
</dbReference>
<dbReference type="RefSeq" id="WP_004921655.1">
    <property type="nucleotide sequence ID" value="NC_005966.1"/>
</dbReference>
<dbReference type="SMR" id="O24849"/>
<dbReference type="STRING" id="202950.GCA_001485005_01304"/>
<dbReference type="CAZy" id="GT51">
    <property type="family name" value="Glycosyltransferase Family 51"/>
</dbReference>
<dbReference type="DNASU" id="2879151"/>
<dbReference type="GeneID" id="45233503"/>
<dbReference type="KEGG" id="aci:ACIAD1061"/>
<dbReference type="eggNOG" id="COG0744">
    <property type="taxonomic scope" value="Bacteria"/>
</dbReference>
<dbReference type="HOGENOM" id="CLU_006354_1_1_6"/>
<dbReference type="OrthoDB" id="9766909at2"/>
<dbReference type="BioCyc" id="ASP62977:ACIAD_RS04890-MONOMER"/>
<dbReference type="UniPathway" id="UPA00219"/>
<dbReference type="Proteomes" id="UP000000430">
    <property type="component" value="Chromosome"/>
</dbReference>
<dbReference type="GO" id="GO:0009274">
    <property type="term" value="C:peptidoglycan-based cell wall"/>
    <property type="evidence" value="ECO:0007669"/>
    <property type="project" value="InterPro"/>
</dbReference>
<dbReference type="GO" id="GO:0005886">
    <property type="term" value="C:plasma membrane"/>
    <property type="evidence" value="ECO:0007669"/>
    <property type="project" value="UniProtKB-SubCell"/>
</dbReference>
<dbReference type="GO" id="GO:0016763">
    <property type="term" value="F:pentosyltransferase activity"/>
    <property type="evidence" value="ECO:0007669"/>
    <property type="project" value="InterPro"/>
</dbReference>
<dbReference type="GO" id="GO:0008955">
    <property type="term" value="F:peptidoglycan glycosyltransferase activity"/>
    <property type="evidence" value="ECO:0007669"/>
    <property type="project" value="UniProtKB-UniRule"/>
</dbReference>
<dbReference type="GO" id="GO:0071555">
    <property type="term" value="P:cell wall organization"/>
    <property type="evidence" value="ECO:0007669"/>
    <property type="project" value="UniProtKB-KW"/>
</dbReference>
<dbReference type="GO" id="GO:0009252">
    <property type="term" value="P:peptidoglycan biosynthetic process"/>
    <property type="evidence" value="ECO:0007669"/>
    <property type="project" value="UniProtKB-UniRule"/>
</dbReference>
<dbReference type="GO" id="GO:0008360">
    <property type="term" value="P:regulation of cell shape"/>
    <property type="evidence" value="ECO:0007669"/>
    <property type="project" value="UniProtKB-KW"/>
</dbReference>
<dbReference type="Gene3D" id="1.10.3810.10">
    <property type="entry name" value="Biosynthetic peptidoglycan transglycosylase-like"/>
    <property type="match status" value="1"/>
</dbReference>
<dbReference type="HAMAP" id="MF_00766">
    <property type="entry name" value="PGT_MtgA"/>
    <property type="match status" value="1"/>
</dbReference>
<dbReference type="InterPro" id="IPR001264">
    <property type="entry name" value="Glyco_trans_51"/>
</dbReference>
<dbReference type="InterPro" id="IPR023346">
    <property type="entry name" value="Lysozyme-like_dom_sf"/>
</dbReference>
<dbReference type="InterPro" id="IPR036950">
    <property type="entry name" value="PBP_transglycosylase"/>
</dbReference>
<dbReference type="InterPro" id="IPR011812">
    <property type="entry name" value="Pep_trsgly"/>
</dbReference>
<dbReference type="NCBIfam" id="TIGR02070">
    <property type="entry name" value="mono_pep_trsgly"/>
    <property type="match status" value="1"/>
</dbReference>
<dbReference type="PANTHER" id="PTHR30400:SF0">
    <property type="entry name" value="BIOSYNTHETIC PEPTIDOGLYCAN TRANSGLYCOSYLASE"/>
    <property type="match status" value="1"/>
</dbReference>
<dbReference type="PANTHER" id="PTHR30400">
    <property type="entry name" value="MONOFUNCTIONAL BIOSYNTHETIC PEPTIDOGLYCAN TRANSGLYCOSYLASE"/>
    <property type="match status" value="1"/>
</dbReference>
<dbReference type="Pfam" id="PF00912">
    <property type="entry name" value="Transgly"/>
    <property type="match status" value="1"/>
</dbReference>
<dbReference type="SUPFAM" id="SSF53955">
    <property type="entry name" value="Lysozyme-like"/>
    <property type="match status" value="1"/>
</dbReference>
<feature type="chain" id="PRO_0000083114" description="Biosynthetic peptidoglycan transglycosylase">
    <location>
        <begin position="1"/>
        <end position="224"/>
    </location>
</feature>
<feature type="transmembrane region" description="Helical" evidence="1">
    <location>
        <begin position="9"/>
        <end position="29"/>
    </location>
</feature>
<comment type="function">
    <text evidence="1">Peptidoglycan polymerase that catalyzes glycan chain elongation from lipid-linked precursors.</text>
</comment>
<comment type="catalytic activity">
    <reaction evidence="1">
        <text>[GlcNAc-(1-&gt;4)-Mur2Ac(oyl-L-Ala-gamma-D-Glu-L-Lys-D-Ala-D-Ala)](n)-di-trans,octa-cis-undecaprenyl diphosphate + beta-D-GlcNAc-(1-&gt;4)-Mur2Ac(oyl-L-Ala-gamma-D-Glu-L-Lys-D-Ala-D-Ala)-di-trans,octa-cis-undecaprenyl diphosphate = [GlcNAc-(1-&gt;4)-Mur2Ac(oyl-L-Ala-gamma-D-Glu-L-Lys-D-Ala-D-Ala)](n+1)-di-trans,octa-cis-undecaprenyl diphosphate + di-trans,octa-cis-undecaprenyl diphosphate + H(+)</text>
        <dbReference type="Rhea" id="RHEA:23708"/>
        <dbReference type="Rhea" id="RHEA-COMP:9602"/>
        <dbReference type="Rhea" id="RHEA-COMP:9603"/>
        <dbReference type="ChEBI" id="CHEBI:15378"/>
        <dbReference type="ChEBI" id="CHEBI:58405"/>
        <dbReference type="ChEBI" id="CHEBI:60033"/>
        <dbReference type="ChEBI" id="CHEBI:78435"/>
        <dbReference type="EC" id="2.4.99.28"/>
    </reaction>
</comment>
<comment type="pathway">
    <text evidence="1">Cell wall biogenesis; peptidoglycan biosynthesis.</text>
</comment>
<comment type="subcellular location">
    <subcellularLocation>
        <location evidence="1">Cell inner membrane</location>
        <topology evidence="1">Single-pass membrane protein</topology>
    </subcellularLocation>
</comment>
<comment type="similarity">
    <text evidence="1">Belongs to the glycosyltransferase 51 family.</text>
</comment>
<name>MTGA_ACIAD</name>
<proteinExistence type="inferred from homology"/>
<evidence type="ECO:0000255" key="1">
    <source>
        <dbReference type="HAMAP-Rule" id="MF_00766"/>
    </source>
</evidence>
<organism>
    <name type="scientific">Acinetobacter baylyi (strain ATCC 33305 / BD413 / ADP1)</name>
    <dbReference type="NCBI Taxonomy" id="62977"/>
    <lineage>
        <taxon>Bacteria</taxon>
        <taxon>Pseudomonadati</taxon>
        <taxon>Pseudomonadota</taxon>
        <taxon>Gammaproteobacteria</taxon>
        <taxon>Moraxellales</taxon>
        <taxon>Moraxellaceae</taxon>
        <taxon>Acinetobacter</taxon>
    </lineage>
</organism>
<accession>O24849</accession>
<reference key="1">
    <citation type="journal article" date="1995" name="Microbiology">
        <title>Two genes encoding proteins with similarities to rubredoxin and rubredoxin reductase are required for conversion of dodecane to lauric acid in Acinetobacter calcoaceticus ADP1.</title>
        <authorList>
            <person name="Geissdoerfer W."/>
            <person name="Frosch C.S."/>
            <person name="Haspel G."/>
            <person name="Ehrt S."/>
            <person name="Hillen W."/>
        </authorList>
    </citation>
    <scope>NUCLEOTIDE SEQUENCE [GENOMIC DNA]</scope>
</reference>
<reference key="2">
    <citation type="journal article" date="1997" name="Gene">
        <title>Nucleotide sequence of a putative periplasmic Mn superoxide dismutase from Acinetobacter calcoaceticus ADP1.</title>
        <authorList>
            <person name="Geissdoerfer W."/>
            <person name="Ratajczak A."/>
            <person name="Hillen W."/>
        </authorList>
    </citation>
    <scope>NUCLEOTIDE SEQUENCE [GENOMIC DNA]</scope>
</reference>
<reference key="3">
    <citation type="journal article" date="2004" name="Nucleic Acids Res.">
        <title>Unique features revealed by the genome sequence of Acinetobacter sp. ADP1, a versatile and naturally transformation competent bacterium.</title>
        <authorList>
            <person name="Barbe V."/>
            <person name="Vallenet D."/>
            <person name="Fonknechten N."/>
            <person name="Kreimeyer A."/>
            <person name="Oztas S."/>
            <person name="Labarre L."/>
            <person name="Cruveiller S."/>
            <person name="Robert C."/>
            <person name="Duprat S."/>
            <person name="Wincker P."/>
            <person name="Ornston L.N."/>
            <person name="Weissenbach J."/>
            <person name="Marliere P."/>
            <person name="Cohen G.N."/>
            <person name="Medigue C."/>
        </authorList>
    </citation>
    <scope>NUCLEOTIDE SEQUENCE [LARGE SCALE GENOMIC DNA]</scope>
    <source>
        <strain>ATCC 33305 / BD413 / ADP1</strain>
    </source>
</reference>
<sequence>MKRFIVRAVLILVSFVLLIQLWIFCSLAWWRTHPVETTMFMRLDYWSDSSKPIQQQWRDYDEISDNFKKAVVAAEDGKFVHHHGFDWEGIQYALEKNEKSGEVVNGGSTISQQLAKNLFLYNQRSLIRKGQEAIATWMMERMWSKQRILEVYMNSVQFGDHLYGVEAASHYYFHRSAQNLTRDQAAFLAALLPNPKYYQENRNDPRFKFKKRFTLKYMRYSEIP</sequence>